<sequence length="146" mass="17038">MNQVSEGSRTVSVEEMPRVLQLRAANTNITEGESTSQSRNVRWEEDVVDNENMNKKKTKICCIFHPAQEEEDPEQLCPSDHEHSSSSSSSSSSESDDDDKYNSEQRRQRRIERRRRRQKTNRPASPNAYEIQPDYSEYRKRMNANV</sequence>
<reference key="1">
    <citation type="journal article" date="2004" name="Nature">
        <title>Genome evolution in yeasts.</title>
        <authorList>
            <person name="Dujon B."/>
            <person name="Sherman D."/>
            <person name="Fischer G."/>
            <person name="Durrens P."/>
            <person name="Casaregola S."/>
            <person name="Lafontaine I."/>
            <person name="de Montigny J."/>
            <person name="Marck C."/>
            <person name="Neuveglise C."/>
            <person name="Talla E."/>
            <person name="Goffard N."/>
            <person name="Frangeul L."/>
            <person name="Aigle M."/>
            <person name="Anthouard V."/>
            <person name="Babour A."/>
            <person name="Barbe V."/>
            <person name="Barnay S."/>
            <person name="Blanchin S."/>
            <person name="Beckerich J.-M."/>
            <person name="Beyne E."/>
            <person name="Bleykasten C."/>
            <person name="Boisrame A."/>
            <person name="Boyer J."/>
            <person name="Cattolico L."/>
            <person name="Confanioleri F."/>
            <person name="de Daruvar A."/>
            <person name="Despons L."/>
            <person name="Fabre E."/>
            <person name="Fairhead C."/>
            <person name="Ferry-Dumazet H."/>
            <person name="Groppi A."/>
            <person name="Hantraye F."/>
            <person name="Hennequin C."/>
            <person name="Jauniaux N."/>
            <person name="Joyet P."/>
            <person name="Kachouri R."/>
            <person name="Kerrest A."/>
            <person name="Koszul R."/>
            <person name="Lemaire M."/>
            <person name="Lesur I."/>
            <person name="Ma L."/>
            <person name="Muller H."/>
            <person name="Nicaud J.-M."/>
            <person name="Nikolski M."/>
            <person name="Oztas S."/>
            <person name="Ozier-Kalogeropoulos O."/>
            <person name="Pellenz S."/>
            <person name="Potier S."/>
            <person name="Richard G.-F."/>
            <person name="Straub M.-L."/>
            <person name="Suleau A."/>
            <person name="Swennen D."/>
            <person name="Tekaia F."/>
            <person name="Wesolowski-Louvel M."/>
            <person name="Westhof E."/>
            <person name="Wirth B."/>
            <person name="Zeniou-Meyer M."/>
            <person name="Zivanovic Y."/>
            <person name="Bolotin-Fukuhara M."/>
            <person name="Thierry A."/>
            <person name="Bouchier C."/>
            <person name="Caudron B."/>
            <person name="Scarpelli C."/>
            <person name="Gaillardin C."/>
            <person name="Weissenbach J."/>
            <person name="Wincker P."/>
            <person name="Souciet J.-L."/>
        </authorList>
    </citation>
    <scope>NUCLEOTIDE SEQUENCE [LARGE SCALE GENOMIC DNA]</scope>
    <source>
        <strain>ATCC 2001 / BCRC 20586 / JCM 3761 / NBRC 0622 / NRRL Y-65 / CBS 138</strain>
    </source>
</reference>
<comment type="function">
    <text evidence="1">Regulator of type 1 phosphatases which maintains protein phosphatase activity under strict control.</text>
</comment>
<comment type="subcellular location">
    <subcellularLocation>
        <location evidence="1">Nucleus</location>
    </subcellularLocation>
</comment>
<comment type="similarity">
    <text evidence="3">Belongs to the YPI1 family.</text>
</comment>
<organism>
    <name type="scientific">Candida glabrata (strain ATCC 2001 / BCRC 20586 / JCM 3761 / NBRC 0622 / NRRL Y-65 / CBS 138)</name>
    <name type="common">Yeast</name>
    <name type="synonym">Nakaseomyces glabratus</name>
    <dbReference type="NCBI Taxonomy" id="284593"/>
    <lineage>
        <taxon>Eukaryota</taxon>
        <taxon>Fungi</taxon>
        <taxon>Dikarya</taxon>
        <taxon>Ascomycota</taxon>
        <taxon>Saccharomycotina</taxon>
        <taxon>Saccharomycetes</taxon>
        <taxon>Saccharomycetales</taxon>
        <taxon>Saccharomycetaceae</taxon>
        <taxon>Nakaseomyces</taxon>
    </lineage>
</organism>
<accession>Q6FUM5</accession>
<name>YPI1_CANGA</name>
<protein>
    <recommendedName>
        <fullName>Type 1 phosphatases regulator YPI1</fullName>
    </recommendedName>
</protein>
<feature type="chain" id="PRO_0000333471" description="Type 1 phosphatases regulator YPI1">
    <location>
        <begin position="1"/>
        <end position="146"/>
    </location>
</feature>
<feature type="region of interest" description="Disordered" evidence="2">
    <location>
        <begin position="23"/>
        <end position="146"/>
    </location>
</feature>
<feature type="compositionally biased region" description="Polar residues" evidence="2">
    <location>
        <begin position="24"/>
        <end position="40"/>
    </location>
</feature>
<feature type="compositionally biased region" description="Basic residues" evidence="2">
    <location>
        <begin position="107"/>
        <end position="120"/>
    </location>
</feature>
<keyword id="KW-0539">Nucleus</keyword>
<keyword id="KW-1185">Reference proteome</keyword>
<evidence type="ECO:0000250" key="1"/>
<evidence type="ECO:0000256" key="2">
    <source>
        <dbReference type="SAM" id="MobiDB-lite"/>
    </source>
</evidence>
<evidence type="ECO:0000305" key="3"/>
<proteinExistence type="inferred from homology"/>
<gene>
    <name type="primary">YPI1</name>
    <name type="ordered locus">CAGL0F02255g</name>
</gene>
<dbReference type="EMBL" id="CR380952">
    <property type="protein sequence ID" value="CAG58993.1"/>
    <property type="molecule type" value="Genomic_DNA"/>
</dbReference>
<dbReference type="RefSeq" id="XP_446069.1">
    <property type="nucleotide sequence ID" value="XM_446069.1"/>
</dbReference>
<dbReference type="SMR" id="Q6FUM5"/>
<dbReference type="FunCoup" id="Q6FUM5">
    <property type="interactions" value="177"/>
</dbReference>
<dbReference type="STRING" id="284593.Q6FUM5"/>
<dbReference type="EnsemblFungi" id="CAGL0F02255g-T">
    <property type="protein sequence ID" value="CAGL0F02255g-T-p1"/>
    <property type="gene ID" value="CAGL0F02255g"/>
</dbReference>
<dbReference type="KEGG" id="cgr:2887827"/>
<dbReference type="CGD" id="CAL0129177">
    <property type="gene designation" value="CAGL0F02255g"/>
</dbReference>
<dbReference type="VEuPathDB" id="FungiDB:B1J91_F02255g"/>
<dbReference type="VEuPathDB" id="FungiDB:CAGL0F02255g"/>
<dbReference type="eggNOG" id="KOG4102">
    <property type="taxonomic scope" value="Eukaryota"/>
</dbReference>
<dbReference type="HOGENOM" id="CLU_098333_3_0_1"/>
<dbReference type="InParanoid" id="Q6FUM5"/>
<dbReference type="OMA" id="AYEVQPH"/>
<dbReference type="Proteomes" id="UP000002428">
    <property type="component" value="Chromosome F"/>
</dbReference>
<dbReference type="GO" id="GO:0005634">
    <property type="term" value="C:nucleus"/>
    <property type="evidence" value="ECO:0007669"/>
    <property type="project" value="UniProtKB-SubCell"/>
</dbReference>
<dbReference type="GO" id="GO:0000164">
    <property type="term" value="C:protein phosphatase type 1 complex"/>
    <property type="evidence" value="ECO:0007669"/>
    <property type="project" value="EnsemblFungi"/>
</dbReference>
<dbReference type="GO" id="GO:0008157">
    <property type="term" value="F:protein phosphatase 1 binding"/>
    <property type="evidence" value="ECO:0007669"/>
    <property type="project" value="TreeGrafter"/>
</dbReference>
<dbReference type="GO" id="GO:0072542">
    <property type="term" value="F:protein phosphatase activator activity"/>
    <property type="evidence" value="ECO:0007669"/>
    <property type="project" value="EnsemblFungi"/>
</dbReference>
<dbReference type="GO" id="GO:0004865">
    <property type="term" value="F:protein serine/threonine phosphatase inhibitor activity"/>
    <property type="evidence" value="ECO:0007669"/>
    <property type="project" value="EnsemblFungi"/>
</dbReference>
<dbReference type="GO" id="GO:0005977">
    <property type="term" value="P:glycogen metabolic process"/>
    <property type="evidence" value="ECO:0007669"/>
    <property type="project" value="EnsemblFungi"/>
</dbReference>
<dbReference type="GO" id="GO:0006873">
    <property type="term" value="P:intracellular monoatomic ion homeostasis"/>
    <property type="evidence" value="ECO:0007669"/>
    <property type="project" value="EnsemblFungi"/>
</dbReference>
<dbReference type="GO" id="GO:0007094">
    <property type="term" value="P:mitotic spindle assembly checkpoint signaling"/>
    <property type="evidence" value="ECO:0007669"/>
    <property type="project" value="EnsemblFungi"/>
</dbReference>
<dbReference type="GO" id="GO:1900180">
    <property type="term" value="P:regulation of protein localization to nucleus"/>
    <property type="evidence" value="ECO:0007669"/>
    <property type="project" value="EnsemblFungi"/>
</dbReference>
<dbReference type="InterPro" id="IPR011107">
    <property type="entry name" value="PPI_Ypi1"/>
</dbReference>
<dbReference type="PANTHER" id="PTHR20835:SF0">
    <property type="entry name" value="E3 UBIQUITIN-PROTEIN LIGASE PPP1R11"/>
    <property type="match status" value="1"/>
</dbReference>
<dbReference type="PANTHER" id="PTHR20835">
    <property type="entry name" value="E3 UBIQUITIN-PROTEIN LIGASE PPP1R11-RELATED"/>
    <property type="match status" value="1"/>
</dbReference>
<dbReference type="Pfam" id="PF07491">
    <property type="entry name" value="PPI_Ypi1"/>
    <property type="match status" value="1"/>
</dbReference>